<keyword id="KW-0238">DNA-binding</keyword>
<keyword id="KW-0479">Metal-binding</keyword>
<keyword id="KW-0533">Nickel</keyword>
<keyword id="KW-0804">Transcription</keyword>
<keyword id="KW-0805">Transcription regulation</keyword>
<sequence length="148" mass="17190">MDTHNKGDSIIRFSVSLQQNLLDELDNRIIKNGYSSRSELVRDMIREKLVEDNWAEDNPNDESKIAVLVVIYDHHQRELNQRMIDIQHASGTHVLCTTHIHMDEHNCLETIILQGNSFEIQRLQLEIGGLRGVKFAKLTKAFSFEYDE</sequence>
<evidence type="ECO:0000255" key="1">
    <source>
        <dbReference type="HAMAP-Rule" id="MF_00476"/>
    </source>
</evidence>
<proteinExistence type="inferred from homology"/>
<name>NIKR_HELPH</name>
<gene>
    <name type="ordered locus">HPAG1_1285</name>
</gene>
<reference key="1">
    <citation type="journal article" date="2006" name="Proc. Natl. Acad. Sci. U.S.A.">
        <title>The complete genome sequence of a chronic atrophic gastritis Helicobacter pylori strain: evolution during disease progression.</title>
        <authorList>
            <person name="Oh J.D."/>
            <person name="Kling-Baeckhed H."/>
            <person name="Giannakis M."/>
            <person name="Xu J."/>
            <person name="Fulton R.S."/>
            <person name="Fulton L.A."/>
            <person name="Cordum H.S."/>
            <person name="Wang C."/>
            <person name="Elliott G."/>
            <person name="Edwards J."/>
            <person name="Mardis E.R."/>
            <person name="Engstrand L.G."/>
            <person name="Gordon J.I."/>
        </authorList>
    </citation>
    <scope>NUCLEOTIDE SEQUENCE [LARGE SCALE GENOMIC DNA]</scope>
    <source>
        <strain>HPAG1</strain>
    </source>
</reference>
<comment type="function">
    <text evidence="1">Transcriptional regulator.</text>
</comment>
<comment type="cofactor">
    <cofactor evidence="1">
        <name>Ni(2+)</name>
        <dbReference type="ChEBI" id="CHEBI:49786"/>
    </cofactor>
    <text evidence="1">Binds 1 nickel ion per subunit.</text>
</comment>
<comment type="similarity">
    <text evidence="1">Belongs to the transcriptional regulatory CopG/NikR family.</text>
</comment>
<protein>
    <recommendedName>
        <fullName evidence="1">Putative nickel-responsive regulator</fullName>
    </recommendedName>
</protein>
<accession>Q1CRS0</accession>
<dbReference type="EMBL" id="CP000241">
    <property type="protein sequence ID" value="ABF85352.1"/>
    <property type="molecule type" value="Genomic_DNA"/>
</dbReference>
<dbReference type="RefSeq" id="WP_000379504.1">
    <property type="nucleotide sequence ID" value="NC_008086.1"/>
</dbReference>
<dbReference type="SMR" id="Q1CRS0"/>
<dbReference type="KEGG" id="hpa:HPAG1_1285"/>
<dbReference type="HOGENOM" id="CLU_113319_1_0_7"/>
<dbReference type="GO" id="GO:0003677">
    <property type="term" value="F:DNA binding"/>
    <property type="evidence" value="ECO:0007669"/>
    <property type="project" value="UniProtKB-KW"/>
</dbReference>
<dbReference type="GO" id="GO:0003700">
    <property type="term" value="F:DNA-binding transcription factor activity"/>
    <property type="evidence" value="ECO:0007669"/>
    <property type="project" value="UniProtKB-UniRule"/>
</dbReference>
<dbReference type="GO" id="GO:0016151">
    <property type="term" value="F:nickel cation binding"/>
    <property type="evidence" value="ECO:0007669"/>
    <property type="project" value="UniProtKB-UniRule"/>
</dbReference>
<dbReference type="GO" id="GO:0010045">
    <property type="term" value="P:response to nickel cation"/>
    <property type="evidence" value="ECO:0007669"/>
    <property type="project" value="InterPro"/>
</dbReference>
<dbReference type="CDD" id="cd22231">
    <property type="entry name" value="RHH_NikR_HicB-like"/>
    <property type="match status" value="1"/>
</dbReference>
<dbReference type="FunFam" id="1.10.1220.10:FF:000010">
    <property type="entry name" value="Putative nickel-responsive regulator"/>
    <property type="match status" value="1"/>
</dbReference>
<dbReference type="FunFam" id="3.30.70.1150:FF:000004">
    <property type="entry name" value="Putative nickel-responsive regulator"/>
    <property type="match status" value="1"/>
</dbReference>
<dbReference type="Gene3D" id="3.30.70.1150">
    <property type="entry name" value="ACT-like. Chain A, domain 2"/>
    <property type="match status" value="1"/>
</dbReference>
<dbReference type="Gene3D" id="1.10.1220.10">
    <property type="entry name" value="Met repressor-like"/>
    <property type="match status" value="1"/>
</dbReference>
<dbReference type="HAMAP" id="MF_00476">
    <property type="entry name" value="NikR"/>
    <property type="match status" value="1"/>
</dbReference>
<dbReference type="InterPro" id="IPR027271">
    <property type="entry name" value="Acetolactate_synth/TF_NikR_C"/>
</dbReference>
<dbReference type="InterPro" id="IPR045865">
    <property type="entry name" value="ACT-like_dom_sf"/>
</dbReference>
<dbReference type="InterPro" id="IPR013321">
    <property type="entry name" value="Arc_rbn_hlx_hlx"/>
</dbReference>
<dbReference type="InterPro" id="IPR002145">
    <property type="entry name" value="CopG"/>
</dbReference>
<dbReference type="InterPro" id="IPR050192">
    <property type="entry name" value="CopG/NikR_regulator"/>
</dbReference>
<dbReference type="InterPro" id="IPR022988">
    <property type="entry name" value="Ni_resp_reg_NikR"/>
</dbReference>
<dbReference type="InterPro" id="IPR010985">
    <property type="entry name" value="Ribbon_hlx_hlx"/>
</dbReference>
<dbReference type="InterPro" id="IPR014864">
    <property type="entry name" value="TF_NikR_Ni-bd_C"/>
</dbReference>
<dbReference type="NCBIfam" id="NF001884">
    <property type="entry name" value="PRK00630.1"/>
    <property type="match status" value="1"/>
</dbReference>
<dbReference type="NCBIfam" id="NF002169">
    <property type="entry name" value="PRK01002.1"/>
    <property type="match status" value="1"/>
</dbReference>
<dbReference type="NCBIfam" id="NF002815">
    <property type="entry name" value="PRK02967.1"/>
    <property type="match status" value="1"/>
</dbReference>
<dbReference type="NCBIfam" id="NF003381">
    <property type="entry name" value="PRK04460.1"/>
    <property type="match status" value="1"/>
</dbReference>
<dbReference type="PANTHER" id="PTHR34719">
    <property type="entry name" value="NICKEL-RESPONSIVE REGULATOR"/>
    <property type="match status" value="1"/>
</dbReference>
<dbReference type="PANTHER" id="PTHR34719:SF2">
    <property type="entry name" value="NICKEL-RESPONSIVE REGULATOR"/>
    <property type="match status" value="1"/>
</dbReference>
<dbReference type="Pfam" id="PF08753">
    <property type="entry name" value="NikR_C"/>
    <property type="match status" value="1"/>
</dbReference>
<dbReference type="Pfam" id="PF01402">
    <property type="entry name" value="RHH_1"/>
    <property type="match status" value="1"/>
</dbReference>
<dbReference type="SUPFAM" id="SSF55021">
    <property type="entry name" value="ACT-like"/>
    <property type="match status" value="1"/>
</dbReference>
<dbReference type="SUPFAM" id="SSF47598">
    <property type="entry name" value="Ribbon-helix-helix"/>
    <property type="match status" value="1"/>
</dbReference>
<feature type="chain" id="PRO_1000014069" description="Putative nickel-responsive regulator">
    <location>
        <begin position="1"/>
        <end position="148"/>
    </location>
</feature>
<feature type="binding site" evidence="1">
    <location>
        <position position="88"/>
    </location>
    <ligand>
        <name>Ni(2+)</name>
        <dbReference type="ChEBI" id="CHEBI:49786"/>
    </ligand>
</feature>
<feature type="binding site" evidence="1">
    <location>
        <position position="99"/>
    </location>
    <ligand>
        <name>Ni(2+)</name>
        <dbReference type="ChEBI" id="CHEBI:49786"/>
    </ligand>
</feature>
<feature type="binding site" evidence="1">
    <location>
        <position position="101"/>
    </location>
    <ligand>
        <name>Ni(2+)</name>
        <dbReference type="ChEBI" id="CHEBI:49786"/>
    </ligand>
</feature>
<feature type="binding site" evidence="1">
    <location>
        <position position="107"/>
    </location>
    <ligand>
        <name>Ni(2+)</name>
        <dbReference type="ChEBI" id="CHEBI:49786"/>
    </ligand>
</feature>
<organism>
    <name type="scientific">Helicobacter pylori (strain HPAG1)</name>
    <dbReference type="NCBI Taxonomy" id="357544"/>
    <lineage>
        <taxon>Bacteria</taxon>
        <taxon>Pseudomonadati</taxon>
        <taxon>Campylobacterota</taxon>
        <taxon>Epsilonproteobacteria</taxon>
        <taxon>Campylobacterales</taxon>
        <taxon>Helicobacteraceae</taxon>
        <taxon>Helicobacter</taxon>
    </lineage>
</organism>